<gene>
    <name evidence="1" type="primary">rpsI</name>
    <name type="ordered locus">Ccel_0795</name>
</gene>
<proteinExistence type="inferred from homology"/>
<organism>
    <name type="scientific">Ruminiclostridium cellulolyticum (strain ATCC 35319 / DSM 5812 / JCM 6584 / H10)</name>
    <name type="common">Clostridium cellulolyticum</name>
    <dbReference type="NCBI Taxonomy" id="394503"/>
    <lineage>
        <taxon>Bacteria</taxon>
        <taxon>Bacillati</taxon>
        <taxon>Bacillota</taxon>
        <taxon>Clostridia</taxon>
        <taxon>Eubacteriales</taxon>
        <taxon>Oscillospiraceae</taxon>
        <taxon>Ruminiclostridium</taxon>
    </lineage>
</organism>
<keyword id="KW-1185">Reference proteome</keyword>
<keyword id="KW-0687">Ribonucleoprotein</keyword>
<keyword id="KW-0689">Ribosomal protein</keyword>
<reference key="1">
    <citation type="submission" date="2009-01" db="EMBL/GenBank/DDBJ databases">
        <title>Complete sequence of Clostridium cellulolyticum H10.</title>
        <authorList>
            <consortium name="US DOE Joint Genome Institute"/>
            <person name="Lucas S."/>
            <person name="Copeland A."/>
            <person name="Lapidus A."/>
            <person name="Glavina del Rio T."/>
            <person name="Dalin E."/>
            <person name="Tice H."/>
            <person name="Bruce D."/>
            <person name="Goodwin L."/>
            <person name="Pitluck S."/>
            <person name="Chertkov O."/>
            <person name="Saunders E."/>
            <person name="Brettin T."/>
            <person name="Detter J.C."/>
            <person name="Han C."/>
            <person name="Larimer F."/>
            <person name="Land M."/>
            <person name="Hauser L."/>
            <person name="Kyrpides N."/>
            <person name="Ivanova N."/>
            <person name="Zhou J."/>
            <person name="Richardson P."/>
        </authorList>
    </citation>
    <scope>NUCLEOTIDE SEQUENCE [LARGE SCALE GENOMIC DNA]</scope>
    <source>
        <strain>ATCC 35319 / DSM 5812 / JCM 6584 / H10</strain>
    </source>
</reference>
<dbReference type="EMBL" id="CP001348">
    <property type="protein sequence ID" value="ACL75173.1"/>
    <property type="molecule type" value="Genomic_DNA"/>
</dbReference>
<dbReference type="RefSeq" id="WP_015924335.1">
    <property type="nucleotide sequence ID" value="NC_011898.1"/>
</dbReference>
<dbReference type="SMR" id="B8I816"/>
<dbReference type="STRING" id="394503.Ccel_0795"/>
<dbReference type="KEGG" id="cce:Ccel_0795"/>
<dbReference type="eggNOG" id="COG0103">
    <property type="taxonomic scope" value="Bacteria"/>
</dbReference>
<dbReference type="HOGENOM" id="CLU_046483_2_1_9"/>
<dbReference type="OrthoDB" id="9803965at2"/>
<dbReference type="Proteomes" id="UP000001349">
    <property type="component" value="Chromosome"/>
</dbReference>
<dbReference type="GO" id="GO:0022627">
    <property type="term" value="C:cytosolic small ribosomal subunit"/>
    <property type="evidence" value="ECO:0007669"/>
    <property type="project" value="TreeGrafter"/>
</dbReference>
<dbReference type="GO" id="GO:0003723">
    <property type="term" value="F:RNA binding"/>
    <property type="evidence" value="ECO:0007669"/>
    <property type="project" value="TreeGrafter"/>
</dbReference>
<dbReference type="GO" id="GO:0003735">
    <property type="term" value="F:structural constituent of ribosome"/>
    <property type="evidence" value="ECO:0007669"/>
    <property type="project" value="InterPro"/>
</dbReference>
<dbReference type="GO" id="GO:0006412">
    <property type="term" value="P:translation"/>
    <property type="evidence" value="ECO:0007669"/>
    <property type="project" value="UniProtKB-UniRule"/>
</dbReference>
<dbReference type="FunFam" id="3.30.230.10:FF:000001">
    <property type="entry name" value="30S ribosomal protein S9"/>
    <property type="match status" value="1"/>
</dbReference>
<dbReference type="Gene3D" id="3.30.230.10">
    <property type="match status" value="1"/>
</dbReference>
<dbReference type="HAMAP" id="MF_00532_B">
    <property type="entry name" value="Ribosomal_uS9_B"/>
    <property type="match status" value="1"/>
</dbReference>
<dbReference type="InterPro" id="IPR020568">
    <property type="entry name" value="Ribosomal_Su5_D2-typ_SF"/>
</dbReference>
<dbReference type="InterPro" id="IPR000754">
    <property type="entry name" value="Ribosomal_uS9"/>
</dbReference>
<dbReference type="InterPro" id="IPR023035">
    <property type="entry name" value="Ribosomal_uS9_bac/plastid"/>
</dbReference>
<dbReference type="InterPro" id="IPR020574">
    <property type="entry name" value="Ribosomal_uS9_CS"/>
</dbReference>
<dbReference type="InterPro" id="IPR014721">
    <property type="entry name" value="Ribsml_uS5_D2-typ_fold_subgr"/>
</dbReference>
<dbReference type="NCBIfam" id="NF001099">
    <property type="entry name" value="PRK00132.1"/>
    <property type="match status" value="1"/>
</dbReference>
<dbReference type="PANTHER" id="PTHR21569">
    <property type="entry name" value="RIBOSOMAL PROTEIN S9"/>
    <property type="match status" value="1"/>
</dbReference>
<dbReference type="PANTHER" id="PTHR21569:SF1">
    <property type="entry name" value="SMALL RIBOSOMAL SUBUNIT PROTEIN US9M"/>
    <property type="match status" value="1"/>
</dbReference>
<dbReference type="Pfam" id="PF00380">
    <property type="entry name" value="Ribosomal_S9"/>
    <property type="match status" value="1"/>
</dbReference>
<dbReference type="SUPFAM" id="SSF54211">
    <property type="entry name" value="Ribosomal protein S5 domain 2-like"/>
    <property type="match status" value="1"/>
</dbReference>
<dbReference type="PROSITE" id="PS00360">
    <property type="entry name" value="RIBOSOMAL_S9"/>
    <property type="match status" value="1"/>
</dbReference>
<protein>
    <recommendedName>
        <fullName evidence="1">Small ribosomal subunit protein uS9</fullName>
    </recommendedName>
    <alternativeName>
        <fullName evidence="3">30S ribosomal protein S9</fullName>
    </alternativeName>
</protein>
<name>RS9_RUMCH</name>
<feature type="chain" id="PRO_1000146444" description="Small ribosomal subunit protein uS9">
    <location>
        <begin position="1"/>
        <end position="130"/>
    </location>
</feature>
<feature type="region of interest" description="Disordered" evidence="2">
    <location>
        <begin position="104"/>
        <end position="130"/>
    </location>
</feature>
<feature type="compositionally biased region" description="Basic residues" evidence="2">
    <location>
        <begin position="111"/>
        <end position="130"/>
    </location>
</feature>
<evidence type="ECO:0000255" key="1">
    <source>
        <dbReference type="HAMAP-Rule" id="MF_00532"/>
    </source>
</evidence>
<evidence type="ECO:0000256" key="2">
    <source>
        <dbReference type="SAM" id="MobiDB-lite"/>
    </source>
</evidence>
<evidence type="ECO:0000305" key="3"/>
<accession>B8I816</accession>
<sequence>MAKVYYYGTGRRKKSVARVRLVPGEGKFSINDRSLDDYFGLETLKVIVKQPLTLTDTLTKFDVICKVIGGGFTGQAGAIRHGISRALLKADEELRPALKKAGFLTRDPRMKERKKYGLKKARRAPQFSKR</sequence>
<comment type="similarity">
    <text evidence="1">Belongs to the universal ribosomal protein uS9 family.</text>
</comment>